<comment type="function">
    <text evidence="1">May play a role in the formation or function of ciliated cells.</text>
</comment>
<comment type="interaction">
    <interactant intactId="EBI-749988">
        <id>Q9BVM2</id>
    </interactant>
    <interactant intactId="EBI-352939">
        <id>Q9Y230</id>
        <label>RUVBL2</label>
    </interactant>
    <organismsDiffer>false</organismsDiffer>
    <experiments>13</experiments>
</comment>
<comment type="tissue specificity">
    <text evidence="1">Highly expressed in the testis. Weakly expressed in pancreas, skeletal muscle and heart. Expression increases during ciliated cell differentiation.</text>
</comment>
<comment type="similarity">
    <text evidence="4">Belongs to the DPCD family.</text>
</comment>
<reference key="1">
    <citation type="journal article" date="2004" name="Nat. Genet.">
        <title>Complete sequencing and characterization of 21,243 full-length human cDNAs.</title>
        <authorList>
            <person name="Ota T."/>
            <person name="Suzuki Y."/>
            <person name="Nishikawa T."/>
            <person name="Otsuki T."/>
            <person name="Sugiyama T."/>
            <person name="Irie R."/>
            <person name="Wakamatsu A."/>
            <person name="Hayashi K."/>
            <person name="Sato H."/>
            <person name="Nagai K."/>
            <person name="Kimura K."/>
            <person name="Makita H."/>
            <person name="Sekine M."/>
            <person name="Obayashi M."/>
            <person name="Nishi T."/>
            <person name="Shibahara T."/>
            <person name="Tanaka T."/>
            <person name="Ishii S."/>
            <person name="Yamamoto J."/>
            <person name="Saito K."/>
            <person name="Kawai Y."/>
            <person name="Isono Y."/>
            <person name="Nakamura Y."/>
            <person name="Nagahari K."/>
            <person name="Murakami K."/>
            <person name="Yasuda T."/>
            <person name="Iwayanagi T."/>
            <person name="Wagatsuma M."/>
            <person name="Shiratori A."/>
            <person name="Sudo H."/>
            <person name="Hosoiri T."/>
            <person name="Kaku Y."/>
            <person name="Kodaira H."/>
            <person name="Kondo H."/>
            <person name="Sugawara M."/>
            <person name="Takahashi M."/>
            <person name="Kanda K."/>
            <person name="Yokoi T."/>
            <person name="Furuya T."/>
            <person name="Kikkawa E."/>
            <person name="Omura Y."/>
            <person name="Abe K."/>
            <person name="Kamihara K."/>
            <person name="Katsuta N."/>
            <person name="Sato K."/>
            <person name="Tanikawa M."/>
            <person name="Yamazaki M."/>
            <person name="Ninomiya K."/>
            <person name="Ishibashi T."/>
            <person name="Yamashita H."/>
            <person name="Murakawa K."/>
            <person name="Fujimori K."/>
            <person name="Tanai H."/>
            <person name="Kimata M."/>
            <person name="Watanabe M."/>
            <person name="Hiraoka S."/>
            <person name="Chiba Y."/>
            <person name="Ishida S."/>
            <person name="Ono Y."/>
            <person name="Takiguchi S."/>
            <person name="Watanabe S."/>
            <person name="Yosida M."/>
            <person name="Hotuta T."/>
            <person name="Kusano J."/>
            <person name="Kanehori K."/>
            <person name="Takahashi-Fujii A."/>
            <person name="Hara H."/>
            <person name="Tanase T.-O."/>
            <person name="Nomura Y."/>
            <person name="Togiya S."/>
            <person name="Komai F."/>
            <person name="Hara R."/>
            <person name="Takeuchi K."/>
            <person name="Arita M."/>
            <person name="Imose N."/>
            <person name="Musashino K."/>
            <person name="Yuuki H."/>
            <person name="Oshima A."/>
            <person name="Sasaki N."/>
            <person name="Aotsuka S."/>
            <person name="Yoshikawa Y."/>
            <person name="Matsunawa H."/>
            <person name="Ichihara T."/>
            <person name="Shiohata N."/>
            <person name="Sano S."/>
            <person name="Moriya S."/>
            <person name="Momiyama H."/>
            <person name="Satoh N."/>
            <person name="Takami S."/>
            <person name="Terashima Y."/>
            <person name="Suzuki O."/>
            <person name="Nakagawa S."/>
            <person name="Senoh A."/>
            <person name="Mizoguchi H."/>
            <person name="Goto Y."/>
            <person name="Shimizu F."/>
            <person name="Wakebe H."/>
            <person name="Hishigaki H."/>
            <person name="Watanabe T."/>
            <person name="Sugiyama A."/>
            <person name="Takemoto M."/>
            <person name="Kawakami B."/>
            <person name="Yamazaki M."/>
            <person name="Watanabe K."/>
            <person name="Kumagai A."/>
            <person name="Itakura S."/>
            <person name="Fukuzumi Y."/>
            <person name="Fujimori Y."/>
            <person name="Komiyama M."/>
            <person name="Tashiro H."/>
            <person name="Tanigami A."/>
            <person name="Fujiwara T."/>
            <person name="Ono T."/>
            <person name="Yamada K."/>
            <person name="Fujii Y."/>
            <person name="Ozaki K."/>
            <person name="Hirao M."/>
            <person name="Ohmori Y."/>
            <person name="Kawabata A."/>
            <person name="Hikiji T."/>
            <person name="Kobatake N."/>
            <person name="Inagaki H."/>
            <person name="Ikema Y."/>
            <person name="Okamoto S."/>
            <person name="Okitani R."/>
            <person name="Kawakami T."/>
            <person name="Noguchi S."/>
            <person name="Itoh T."/>
            <person name="Shigeta K."/>
            <person name="Senba T."/>
            <person name="Matsumura K."/>
            <person name="Nakajima Y."/>
            <person name="Mizuno T."/>
            <person name="Morinaga M."/>
            <person name="Sasaki M."/>
            <person name="Togashi T."/>
            <person name="Oyama M."/>
            <person name="Hata H."/>
            <person name="Watanabe M."/>
            <person name="Komatsu T."/>
            <person name="Mizushima-Sugano J."/>
            <person name="Satoh T."/>
            <person name="Shirai Y."/>
            <person name="Takahashi Y."/>
            <person name="Nakagawa K."/>
            <person name="Okumura K."/>
            <person name="Nagase T."/>
            <person name="Nomura N."/>
            <person name="Kikuchi H."/>
            <person name="Masuho Y."/>
            <person name="Yamashita R."/>
            <person name="Nakai K."/>
            <person name="Yada T."/>
            <person name="Nakamura Y."/>
            <person name="Ohara O."/>
            <person name="Isogai T."/>
            <person name="Sugano S."/>
        </authorList>
    </citation>
    <scope>NUCLEOTIDE SEQUENCE [LARGE SCALE MRNA]</scope>
    <scope>VARIANT SER-156</scope>
    <source>
        <tissue>Thalamus</tissue>
    </source>
</reference>
<reference key="2">
    <citation type="journal article" date="2004" name="Nature">
        <title>The DNA sequence and comparative analysis of human chromosome 10.</title>
        <authorList>
            <person name="Deloukas P."/>
            <person name="Earthrowl M.E."/>
            <person name="Grafham D.V."/>
            <person name="Rubenfield M."/>
            <person name="French L."/>
            <person name="Steward C.A."/>
            <person name="Sims S.K."/>
            <person name="Jones M.C."/>
            <person name="Searle S."/>
            <person name="Scott C."/>
            <person name="Howe K."/>
            <person name="Hunt S.E."/>
            <person name="Andrews T.D."/>
            <person name="Gilbert J.G.R."/>
            <person name="Swarbreck D."/>
            <person name="Ashurst J.L."/>
            <person name="Taylor A."/>
            <person name="Battles J."/>
            <person name="Bird C.P."/>
            <person name="Ainscough R."/>
            <person name="Almeida J.P."/>
            <person name="Ashwell R.I.S."/>
            <person name="Ambrose K.D."/>
            <person name="Babbage A.K."/>
            <person name="Bagguley C.L."/>
            <person name="Bailey J."/>
            <person name="Banerjee R."/>
            <person name="Bates K."/>
            <person name="Beasley H."/>
            <person name="Bray-Allen S."/>
            <person name="Brown A.J."/>
            <person name="Brown J.Y."/>
            <person name="Burford D.C."/>
            <person name="Burrill W."/>
            <person name="Burton J."/>
            <person name="Cahill P."/>
            <person name="Camire D."/>
            <person name="Carter N.P."/>
            <person name="Chapman J.C."/>
            <person name="Clark S.Y."/>
            <person name="Clarke G."/>
            <person name="Clee C.M."/>
            <person name="Clegg S."/>
            <person name="Corby N."/>
            <person name="Coulson A."/>
            <person name="Dhami P."/>
            <person name="Dutta I."/>
            <person name="Dunn M."/>
            <person name="Faulkner L."/>
            <person name="Frankish A."/>
            <person name="Frankland J.A."/>
            <person name="Garner P."/>
            <person name="Garnett J."/>
            <person name="Gribble S."/>
            <person name="Griffiths C."/>
            <person name="Grocock R."/>
            <person name="Gustafson E."/>
            <person name="Hammond S."/>
            <person name="Harley J.L."/>
            <person name="Hart E."/>
            <person name="Heath P.D."/>
            <person name="Ho T.P."/>
            <person name="Hopkins B."/>
            <person name="Horne J."/>
            <person name="Howden P.J."/>
            <person name="Huckle E."/>
            <person name="Hynds C."/>
            <person name="Johnson C."/>
            <person name="Johnson D."/>
            <person name="Kana A."/>
            <person name="Kay M."/>
            <person name="Kimberley A.M."/>
            <person name="Kershaw J.K."/>
            <person name="Kokkinaki M."/>
            <person name="Laird G.K."/>
            <person name="Lawlor S."/>
            <person name="Lee H.M."/>
            <person name="Leongamornlert D.A."/>
            <person name="Laird G."/>
            <person name="Lloyd C."/>
            <person name="Lloyd D.M."/>
            <person name="Loveland J."/>
            <person name="Lovell J."/>
            <person name="McLaren S."/>
            <person name="McLay K.E."/>
            <person name="McMurray A."/>
            <person name="Mashreghi-Mohammadi M."/>
            <person name="Matthews L."/>
            <person name="Milne S."/>
            <person name="Nickerson T."/>
            <person name="Nguyen M."/>
            <person name="Overton-Larty E."/>
            <person name="Palmer S.A."/>
            <person name="Pearce A.V."/>
            <person name="Peck A.I."/>
            <person name="Pelan S."/>
            <person name="Phillimore B."/>
            <person name="Porter K."/>
            <person name="Rice C.M."/>
            <person name="Rogosin A."/>
            <person name="Ross M.T."/>
            <person name="Sarafidou T."/>
            <person name="Sehra H.K."/>
            <person name="Shownkeen R."/>
            <person name="Skuce C.D."/>
            <person name="Smith M."/>
            <person name="Standring L."/>
            <person name="Sycamore N."/>
            <person name="Tester J."/>
            <person name="Thorpe A."/>
            <person name="Torcasso W."/>
            <person name="Tracey A."/>
            <person name="Tromans A."/>
            <person name="Tsolas J."/>
            <person name="Wall M."/>
            <person name="Walsh J."/>
            <person name="Wang H."/>
            <person name="Weinstock K."/>
            <person name="West A.P."/>
            <person name="Willey D.L."/>
            <person name="Whitehead S.L."/>
            <person name="Wilming L."/>
            <person name="Wray P.W."/>
            <person name="Young L."/>
            <person name="Chen Y."/>
            <person name="Lovering R.C."/>
            <person name="Moschonas N.K."/>
            <person name="Siebert R."/>
            <person name="Fechtel K."/>
            <person name="Bentley D."/>
            <person name="Durbin R.M."/>
            <person name="Hubbard T."/>
            <person name="Doucette-Stamm L."/>
            <person name="Beck S."/>
            <person name="Smith D.R."/>
            <person name="Rogers J."/>
        </authorList>
    </citation>
    <scope>NUCLEOTIDE SEQUENCE [LARGE SCALE GENOMIC DNA]</scope>
</reference>
<reference key="3">
    <citation type="journal article" date="2004" name="Genome Res.">
        <title>The status, quality, and expansion of the NIH full-length cDNA project: the Mammalian Gene Collection (MGC).</title>
        <authorList>
            <consortium name="The MGC Project Team"/>
        </authorList>
    </citation>
    <scope>NUCLEOTIDE SEQUENCE [LARGE SCALE MRNA]</scope>
    <source>
        <tissue>Brain</tissue>
        <tissue>Placenta</tissue>
    </source>
</reference>
<reference key="4">
    <citation type="journal article" date="2004" name="Am. J. Respir. Cell Mol. Biol.">
        <title>Investigation of the possible role of a novel gene, DPCD, in primary ciliary dyskinesia.</title>
        <authorList>
            <person name="Zariwala M."/>
            <person name="O'Neal W.K."/>
            <person name="Noone P.G."/>
            <person name="Leigh M.W."/>
            <person name="Knowles M.R."/>
            <person name="Ostrowski L.E."/>
        </authorList>
    </citation>
    <scope>NUCLEOTIDE SEQUENCE [MRNA] OF 4-203</scope>
    <scope>FUNCTION</scope>
    <scope>TISSUE SPECIFICITY</scope>
    <scope>VARIANTS ARG-56 AND SER-156</scope>
</reference>
<reference key="5">
    <citation type="journal article" date="2007" name="BMC Genomics">
        <title>The full-ORF clone resource of the German cDNA consortium.</title>
        <authorList>
            <person name="Bechtel S."/>
            <person name="Rosenfelder H."/>
            <person name="Duda A."/>
            <person name="Schmidt C.P."/>
            <person name="Ernst U."/>
            <person name="Wellenreuther R."/>
            <person name="Mehrle A."/>
            <person name="Schuster C."/>
            <person name="Bahr A."/>
            <person name="Bloecker H."/>
            <person name="Heubner D."/>
            <person name="Hoerlein A."/>
            <person name="Michel G."/>
            <person name="Wedler H."/>
            <person name="Koehrer K."/>
            <person name="Ottenwaelder B."/>
            <person name="Poustka A."/>
            <person name="Wiemann S."/>
            <person name="Schupp I."/>
        </authorList>
    </citation>
    <scope>NUCLEOTIDE SEQUENCE [LARGE SCALE MRNA] OF 26-203</scope>
    <scope>VARIANT SER-156</scope>
    <source>
        <tissue>Kidney</tissue>
    </source>
</reference>
<reference key="6">
    <citation type="journal article" date="2011" name="BMC Syst. Biol.">
        <title>Initial characterization of the human central proteome.</title>
        <authorList>
            <person name="Burkard T.R."/>
            <person name="Planyavsky M."/>
            <person name="Kaupe I."/>
            <person name="Breitwieser F.P."/>
            <person name="Buerckstuemmer T."/>
            <person name="Bennett K.L."/>
            <person name="Superti-Furga G."/>
            <person name="Colinge J."/>
        </authorList>
    </citation>
    <scope>IDENTIFICATION BY MASS SPECTROMETRY [LARGE SCALE ANALYSIS]</scope>
</reference>
<sequence>MAVTGWLESLRTAQKTALLQDGRRKVHYLFPDGKEMAEEYDEKTSELLVRKWRVKSALGAMGQWQLEVGDPAPLGAGNLGPELIKESNANPIFMRKDTKMSFQWRIRNLPYPKDVYSVSVDQKERCIIVRTTNKKYYKKFSIPDLDRHQLPLDDALLSFAHANCTLIISYQKPKEVVVAESELQKELKKVKTAHSNDGDCKTQ</sequence>
<dbReference type="EMBL" id="AK290154">
    <property type="protein sequence ID" value="BAF82843.1"/>
    <property type="molecule type" value="mRNA"/>
</dbReference>
<dbReference type="EMBL" id="AL627424">
    <property type="status" value="NOT_ANNOTATED_CDS"/>
    <property type="molecule type" value="Genomic_DNA"/>
</dbReference>
<dbReference type="EMBL" id="BC001082">
    <property type="protein sequence ID" value="AAH01082.2"/>
    <property type="molecule type" value="mRNA"/>
</dbReference>
<dbReference type="EMBL" id="BC031695">
    <property type="protein sequence ID" value="AAH31695.1"/>
    <property type="molecule type" value="mRNA"/>
</dbReference>
<dbReference type="EMBL" id="AY532267">
    <property type="protein sequence ID" value="AAS46252.1"/>
    <property type="molecule type" value="mRNA"/>
</dbReference>
<dbReference type="EMBL" id="AL110240">
    <property type="protein sequence ID" value="CAB53691.2"/>
    <property type="molecule type" value="mRNA"/>
</dbReference>
<dbReference type="CCDS" id="CCDS7514.1"/>
<dbReference type="PIR" id="T14771">
    <property type="entry name" value="T14771"/>
</dbReference>
<dbReference type="RefSeq" id="NP_056263.1">
    <property type="nucleotide sequence ID" value="NM_015448.3"/>
</dbReference>
<dbReference type="SASBDB" id="Q9BVM2"/>
<dbReference type="BioGRID" id="117415">
    <property type="interactions" value="52"/>
</dbReference>
<dbReference type="FunCoup" id="Q9BVM2">
    <property type="interactions" value="1973"/>
</dbReference>
<dbReference type="IntAct" id="Q9BVM2">
    <property type="interactions" value="19"/>
</dbReference>
<dbReference type="STRING" id="9606.ENSP00000359170"/>
<dbReference type="GlyGen" id="Q9BVM2">
    <property type="glycosylation" value="1 site, 1 O-linked glycan (1 site)"/>
</dbReference>
<dbReference type="iPTMnet" id="Q9BVM2"/>
<dbReference type="PhosphoSitePlus" id="Q9BVM2"/>
<dbReference type="BioMuta" id="DPCD"/>
<dbReference type="jPOST" id="Q9BVM2"/>
<dbReference type="MassIVE" id="Q9BVM2"/>
<dbReference type="PaxDb" id="9606-ENSP00000359170"/>
<dbReference type="PeptideAtlas" id="Q9BVM2"/>
<dbReference type="ProteomicsDB" id="79219"/>
<dbReference type="Pumba" id="Q9BVM2"/>
<dbReference type="Antibodypedia" id="31286">
    <property type="antibodies" value="182 antibodies from 22 providers"/>
</dbReference>
<dbReference type="DNASU" id="25911"/>
<dbReference type="Ensembl" id="ENST00000370151.9">
    <property type="protein sequence ID" value="ENSP00000359170.4"/>
    <property type="gene ID" value="ENSG00000166171.13"/>
</dbReference>
<dbReference type="GeneID" id="25911"/>
<dbReference type="KEGG" id="hsa:25911"/>
<dbReference type="MANE-Select" id="ENST00000370151.9">
    <property type="protein sequence ID" value="ENSP00000359170.4"/>
    <property type="RefSeq nucleotide sequence ID" value="NM_015448.3"/>
    <property type="RefSeq protein sequence ID" value="NP_056263.1"/>
</dbReference>
<dbReference type="UCSC" id="uc001ktn.4">
    <property type="organism name" value="human"/>
</dbReference>
<dbReference type="AGR" id="HGNC:24542"/>
<dbReference type="CTD" id="25911"/>
<dbReference type="DisGeNET" id="25911"/>
<dbReference type="GeneCards" id="DPCD"/>
<dbReference type="HGNC" id="HGNC:24542">
    <property type="gene designation" value="DPCD"/>
</dbReference>
<dbReference type="HPA" id="ENSG00000166171">
    <property type="expression patterns" value="Tissue enhanced (choroid plexus, testis)"/>
</dbReference>
<dbReference type="MalaCards" id="DPCD"/>
<dbReference type="MIM" id="616467">
    <property type="type" value="gene"/>
</dbReference>
<dbReference type="neXtProt" id="NX_Q9BVM2"/>
<dbReference type="OpenTargets" id="ENSG00000166171"/>
<dbReference type="PharmGKB" id="PA165548502"/>
<dbReference type="VEuPathDB" id="HostDB:ENSG00000166171"/>
<dbReference type="eggNOG" id="ENOG502QUNA">
    <property type="taxonomic scope" value="Eukaryota"/>
</dbReference>
<dbReference type="GeneTree" id="ENSGT00390000014031"/>
<dbReference type="HOGENOM" id="CLU_097313_0_0_1"/>
<dbReference type="InParanoid" id="Q9BVM2"/>
<dbReference type="OMA" id="PILCEME"/>
<dbReference type="OrthoDB" id="10256139at2759"/>
<dbReference type="PAN-GO" id="Q9BVM2">
    <property type="GO annotations" value="0 GO annotations based on evolutionary models"/>
</dbReference>
<dbReference type="PhylomeDB" id="Q9BVM2"/>
<dbReference type="TreeFam" id="TF324098"/>
<dbReference type="PathwayCommons" id="Q9BVM2"/>
<dbReference type="SignaLink" id="Q9BVM2"/>
<dbReference type="BioGRID-ORCS" id="25911">
    <property type="hits" value="49 hits in 1149 CRISPR screens"/>
</dbReference>
<dbReference type="ChiTaRS" id="DPCD">
    <property type="organism name" value="human"/>
</dbReference>
<dbReference type="GenomeRNAi" id="25911"/>
<dbReference type="Pharos" id="Q9BVM2">
    <property type="development level" value="Tbio"/>
</dbReference>
<dbReference type="PRO" id="PR:Q9BVM2"/>
<dbReference type="Proteomes" id="UP000005640">
    <property type="component" value="Chromosome 10"/>
</dbReference>
<dbReference type="RNAct" id="Q9BVM2">
    <property type="molecule type" value="protein"/>
</dbReference>
<dbReference type="Bgee" id="ENSG00000166171">
    <property type="expression patterns" value="Expressed in left testis and 179 other cell types or tissues"/>
</dbReference>
<dbReference type="ExpressionAtlas" id="Q9BVM2">
    <property type="expression patterns" value="baseline and differential"/>
</dbReference>
<dbReference type="GO" id="GO:0005576">
    <property type="term" value="C:extracellular region"/>
    <property type="evidence" value="ECO:0007669"/>
    <property type="project" value="GOC"/>
</dbReference>
<dbReference type="GO" id="GO:0005634">
    <property type="term" value="C:nucleus"/>
    <property type="evidence" value="ECO:0007005"/>
    <property type="project" value="UniProtKB"/>
</dbReference>
<dbReference type="GO" id="GO:0007368">
    <property type="term" value="P:determination of left/right symmetry"/>
    <property type="evidence" value="ECO:0007669"/>
    <property type="project" value="Ensembl"/>
</dbReference>
<dbReference type="GO" id="GO:0003351">
    <property type="term" value="P:epithelial cilium movement involved in extracellular fluid movement"/>
    <property type="evidence" value="ECO:0007669"/>
    <property type="project" value="Ensembl"/>
</dbReference>
<dbReference type="GO" id="GO:0051649">
    <property type="term" value="P:establishment of localization in cell"/>
    <property type="evidence" value="ECO:0007669"/>
    <property type="project" value="Ensembl"/>
</dbReference>
<dbReference type="GO" id="GO:0030317">
    <property type="term" value="P:flagellated sperm motility"/>
    <property type="evidence" value="ECO:0007669"/>
    <property type="project" value="Ensembl"/>
</dbReference>
<dbReference type="GO" id="GO:0021670">
    <property type="term" value="P:lateral ventricle development"/>
    <property type="evidence" value="ECO:0007669"/>
    <property type="project" value="Ensembl"/>
</dbReference>
<dbReference type="GO" id="GO:0007283">
    <property type="term" value="P:spermatogenesis"/>
    <property type="evidence" value="ECO:0007669"/>
    <property type="project" value="Ensembl"/>
</dbReference>
<dbReference type="GO" id="GO:0021678">
    <property type="term" value="P:third ventricle development"/>
    <property type="evidence" value="ECO:0007669"/>
    <property type="project" value="Ensembl"/>
</dbReference>
<dbReference type="InterPro" id="IPR026224">
    <property type="entry name" value="DPCD"/>
</dbReference>
<dbReference type="PANTHER" id="PTHR31921">
    <property type="entry name" value="PROTEIN DPCD"/>
    <property type="match status" value="1"/>
</dbReference>
<dbReference type="PANTHER" id="PTHR31921:SF1">
    <property type="entry name" value="PROTEIN DPCD"/>
    <property type="match status" value="1"/>
</dbReference>
<dbReference type="Pfam" id="PF14913">
    <property type="entry name" value="DPCD"/>
    <property type="match status" value="1"/>
</dbReference>
<dbReference type="PRINTS" id="PR02065">
    <property type="entry name" value="PROTEINDPCD"/>
</dbReference>
<keyword id="KW-1267">Proteomics identification</keyword>
<keyword id="KW-1185">Reference proteome</keyword>
<name>DPCD_HUMAN</name>
<protein>
    <recommendedName>
        <fullName>Protein DPCD</fullName>
    </recommendedName>
</protein>
<organism>
    <name type="scientific">Homo sapiens</name>
    <name type="common">Human</name>
    <dbReference type="NCBI Taxonomy" id="9606"/>
    <lineage>
        <taxon>Eukaryota</taxon>
        <taxon>Metazoa</taxon>
        <taxon>Chordata</taxon>
        <taxon>Craniata</taxon>
        <taxon>Vertebrata</taxon>
        <taxon>Euteleostomi</taxon>
        <taxon>Mammalia</taxon>
        <taxon>Eutheria</taxon>
        <taxon>Euarchontoglires</taxon>
        <taxon>Primates</taxon>
        <taxon>Haplorrhini</taxon>
        <taxon>Catarrhini</taxon>
        <taxon>Hominidae</taxon>
        <taxon>Homo</taxon>
    </lineage>
</organism>
<feature type="chain" id="PRO_0000323723" description="Protein DPCD">
    <location>
        <begin position="1"/>
        <end position="203"/>
    </location>
</feature>
<feature type="sequence variant" id="VAR_039574" description="In dbSNP:rs1331419018." evidence="1">
    <original>S</original>
    <variation>R</variation>
    <location>
        <position position="56"/>
    </location>
</feature>
<feature type="sequence variant" id="VAR_039575" description="In dbSNP:rs7006." evidence="1 2 3">
    <original>L</original>
    <variation>S</variation>
    <location>
        <position position="156"/>
    </location>
</feature>
<feature type="sequence conflict" description="In Ref. 5; CAB53691." evidence="4" ref="5">
    <original>M</original>
    <variation>K</variation>
    <location>
        <position position="100"/>
    </location>
</feature>
<evidence type="ECO:0000269" key="1">
    <source>
    </source>
</evidence>
<evidence type="ECO:0000269" key="2">
    <source>
    </source>
</evidence>
<evidence type="ECO:0000269" key="3">
    <source>
    </source>
</evidence>
<evidence type="ECO:0000305" key="4"/>
<gene>
    <name type="primary">DPCD</name>
</gene>
<proteinExistence type="evidence at protein level"/>
<accession>Q9BVM2</accession>
<accession>A8K289</accession>
<accession>Q6QNL3</accession>
<accession>Q8N5R1</accession>
<accession>Q9UFY6</accession>